<reference key="1">
    <citation type="journal article" date="1994" name="Plant Physiol.">
        <title>A cDNA for Dunaliella tertiolecta cytosol ribosomal protein S11.</title>
        <authorList>
            <person name="la Roche J."/>
            <person name="Wyman K."/>
            <person name="Falkowski P.G."/>
        </authorList>
    </citation>
    <scope>NUCLEOTIDE SEQUENCE [MRNA]</scope>
</reference>
<dbReference type="EMBL" id="X66036">
    <property type="protein sequence ID" value="CAA46835.1"/>
    <property type="molecule type" value="mRNA"/>
</dbReference>
<dbReference type="PIR" id="T10730">
    <property type="entry name" value="T10730"/>
</dbReference>
<dbReference type="SMR" id="P42756"/>
<dbReference type="GO" id="GO:0022627">
    <property type="term" value="C:cytosolic small ribosomal subunit"/>
    <property type="evidence" value="ECO:0007669"/>
    <property type="project" value="TreeGrafter"/>
</dbReference>
<dbReference type="GO" id="GO:0019843">
    <property type="term" value="F:rRNA binding"/>
    <property type="evidence" value="ECO:0007669"/>
    <property type="project" value="UniProtKB-KW"/>
</dbReference>
<dbReference type="GO" id="GO:0003735">
    <property type="term" value="F:structural constituent of ribosome"/>
    <property type="evidence" value="ECO:0007669"/>
    <property type="project" value="InterPro"/>
</dbReference>
<dbReference type="GO" id="GO:0006412">
    <property type="term" value="P:translation"/>
    <property type="evidence" value="ECO:0007669"/>
    <property type="project" value="InterPro"/>
</dbReference>
<dbReference type="CDD" id="cd00364">
    <property type="entry name" value="Ribosomal_uS17"/>
    <property type="match status" value="1"/>
</dbReference>
<dbReference type="FunFam" id="2.40.50.1000:FF:000001">
    <property type="entry name" value="40S ribosomal protein S11"/>
    <property type="match status" value="1"/>
</dbReference>
<dbReference type="Gene3D" id="2.40.50.1000">
    <property type="match status" value="1"/>
</dbReference>
<dbReference type="InterPro" id="IPR012340">
    <property type="entry name" value="NA-bd_OB-fold"/>
</dbReference>
<dbReference type="InterPro" id="IPR000266">
    <property type="entry name" value="Ribosomal_uS17"/>
</dbReference>
<dbReference type="InterPro" id="IPR028333">
    <property type="entry name" value="Ribosomal_uS17_arc/euk"/>
</dbReference>
<dbReference type="InterPro" id="IPR019979">
    <property type="entry name" value="Ribosomal_uS17_CS"/>
</dbReference>
<dbReference type="InterPro" id="IPR032440">
    <property type="entry name" value="Ribosomal_uS17_N"/>
</dbReference>
<dbReference type="NCBIfam" id="NF006345">
    <property type="entry name" value="PRK08572.1"/>
    <property type="match status" value="1"/>
</dbReference>
<dbReference type="NCBIfam" id="TIGR03630">
    <property type="entry name" value="uS17_arch"/>
    <property type="match status" value="1"/>
</dbReference>
<dbReference type="PANTHER" id="PTHR10744">
    <property type="entry name" value="40S RIBOSOMAL PROTEIN S11 FAMILY MEMBER"/>
    <property type="match status" value="1"/>
</dbReference>
<dbReference type="PANTHER" id="PTHR10744:SF9">
    <property type="entry name" value="40S RIBOSOMAL PROTEIN S11-RELATED"/>
    <property type="match status" value="1"/>
</dbReference>
<dbReference type="Pfam" id="PF00366">
    <property type="entry name" value="Ribosomal_S17"/>
    <property type="match status" value="1"/>
</dbReference>
<dbReference type="Pfam" id="PF16205">
    <property type="entry name" value="Ribosomal_S17_N"/>
    <property type="match status" value="1"/>
</dbReference>
<dbReference type="PRINTS" id="PR00973">
    <property type="entry name" value="RIBOSOMALS17"/>
</dbReference>
<dbReference type="SUPFAM" id="SSF50249">
    <property type="entry name" value="Nucleic acid-binding proteins"/>
    <property type="match status" value="1"/>
</dbReference>
<dbReference type="PROSITE" id="PS00056">
    <property type="entry name" value="RIBOSOMAL_S17"/>
    <property type="match status" value="1"/>
</dbReference>
<proteinExistence type="evidence at transcript level"/>
<name>RS11_DUNTE</name>
<accession>P42756</accession>
<protein>
    <recommendedName>
        <fullName evidence="1">Small ribosomal subunit protein uS17</fullName>
    </recommendedName>
    <alternativeName>
        <fullName>40S ribosomal protein S11</fullName>
    </alternativeName>
</protein>
<keyword id="KW-0687">Ribonucleoprotein</keyword>
<keyword id="KW-0689">Ribosomal protein</keyword>
<keyword id="KW-0694">RNA-binding</keyword>
<keyword id="KW-0699">rRNA-binding</keyword>
<gene>
    <name type="primary">RPS11</name>
</gene>
<comment type="similarity">
    <text evidence="1">Belongs to the universal ribosomal protein uS17 family.</text>
</comment>
<organism>
    <name type="scientific">Dunaliella tertiolecta</name>
    <name type="common">Green alga</name>
    <dbReference type="NCBI Taxonomy" id="3047"/>
    <lineage>
        <taxon>Eukaryota</taxon>
        <taxon>Viridiplantae</taxon>
        <taxon>Chlorophyta</taxon>
        <taxon>core chlorophytes</taxon>
        <taxon>Chlorophyceae</taxon>
        <taxon>CS clade</taxon>
        <taxon>Chlamydomonadales</taxon>
        <taxon>Dunaliellaceae</taxon>
        <taxon>Dunaliella</taxon>
    </lineage>
</organism>
<feature type="chain" id="PRO_0000128518" description="Small ribosomal subunit protein uS17">
    <location>
        <begin position="1"/>
        <end position="157"/>
    </location>
</feature>
<evidence type="ECO:0000305" key="1"/>
<sequence>MAEQTEKAFQKQVGVTGCFKSKEKKAPGKSGHRFFKNVGLNFKTPKEAIDGNYVDKKCPFTGNVSIRGRILTGVVKSSKMMRTIIVRRDYLHFIPKYARYEKRHTNIPAHVSPCFRVRDGDTVIIGQCRPLSKTIRFNVLRVIPQAGATGKKSFSGF</sequence>